<dbReference type="EMBL" id="CP000029">
    <property type="protein sequence ID" value="AAW54094.1"/>
    <property type="molecule type" value="Genomic_DNA"/>
</dbReference>
<dbReference type="RefSeq" id="WP_001830079.1">
    <property type="nucleotide sequence ID" value="NC_002976.3"/>
</dbReference>
<dbReference type="SMR" id="Q5HQ56"/>
<dbReference type="STRING" id="176279.SERP0701"/>
<dbReference type="KEGG" id="ser:SERP0701"/>
<dbReference type="eggNOG" id="COG4838">
    <property type="taxonomic scope" value="Bacteria"/>
</dbReference>
<dbReference type="HOGENOM" id="CLU_160493_1_0_9"/>
<dbReference type="Proteomes" id="UP000000531">
    <property type="component" value="Chromosome"/>
</dbReference>
<dbReference type="Gene3D" id="1.10.287.750">
    <property type="entry name" value="SO2669-like"/>
    <property type="match status" value="1"/>
</dbReference>
<dbReference type="HAMAP" id="MF_01560">
    <property type="entry name" value="UPF0358"/>
    <property type="match status" value="1"/>
</dbReference>
<dbReference type="InterPro" id="IPR009983">
    <property type="entry name" value="UPF0358"/>
</dbReference>
<dbReference type="InterPro" id="IPR036270">
    <property type="entry name" value="UPF0358_sf"/>
</dbReference>
<dbReference type="NCBIfam" id="NF010187">
    <property type="entry name" value="PRK13666.1"/>
    <property type="match status" value="1"/>
</dbReference>
<dbReference type="Pfam" id="PF07408">
    <property type="entry name" value="DUF1507"/>
    <property type="match status" value="1"/>
</dbReference>
<dbReference type="SUPFAM" id="SSF140404">
    <property type="entry name" value="EF2458-like"/>
    <property type="match status" value="1"/>
</dbReference>
<evidence type="ECO:0000255" key="1">
    <source>
        <dbReference type="HAMAP-Rule" id="MF_01560"/>
    </source>
</evidence>
<name>Y701_STAEQ</name>
<proteinExistence type="inferred from homology"/>
<keyword id="KW-1185">Reference proteome</keyword>
<organism>
    <name type="scientific">Staphylococcus epidermidis (strain ATCC 35984 / DSM 28319 / BCRC 17069 / CCUG 31568 / BM 3577 / RP62A)</name>
    <dbReference type="NCBI Taxonomy" id="176279"/>
    <lineage>
        <taxon>Bacteria</taxon>
        <taxon>Bacillati</taxon>
        <taxon>Bacillota</taxon>
        <taxon>Bacilli</taxon>
        <taxon>Bacillales</taxon>
        <taxon>Staphylococcaceae</taxon>
        <taxon>Staphylococcus</taxon>
    </lineage>
</organism>
<feature type="chain" id="PRO_0000110658" description="UPF0358 protein SERP0701">
    <location>
        <begin position="1"/>
        <end position="91"/>
    </location>
</feature>
<comment type="similarity">
    <text evidence="1">Belongs to the UPF0358 family.</text>
</comment>
<protein>
    <recommendedName>
        <fullName evidence="1">UPF0358 protein SERP0701</fullName>
    </recommendedName>
</protein>
<gene>
    <name type="ordered locus">SERP0701</name>
</gene>
<accession>Q5HQ56</accession>
<sequence length="91" mass="10409">MSNQSKLNSAAYDQLNKDADRILHLIKVQMDNLTLPSCPLYEEVLDTQMFGLQKEVDFAVQLGLVDKEDGKQLMLRLEKELSKLHEAFTNV</sequence>
<reference key="1">
    <citation type="journal article" date="2005" name="J. Bacteriol.">
        <title>Insights on evolution of virulence and resistance from the complete genome analysis of an early methicillin-resistant Staphylococcus aureus strain and a biofilm-producing methicillin-resistant Staphylococcus epidermidis strain.</title>
        <authorList>
            <person name="Gill S.R."/>
            <person name="Fouts D.E."/>
            <person name="Archer G.L."/>
            <person name="Mongodin E.F."/>
            <person name="DeBoy R.T."/>
            <person name="Ravel J."/>
            <person name="Paulsen I.T."/>
            <person name="Kolonay J.F."/>
            <person name="Brinkac L.M."/>
            <person name="Beanan M.J."/>
            <person name="Dodson R.J."/>
            <person name="Daugherty S.C."/>
            <person name="Madupu R."/>
            <person name="Angiuoli S.V."/>
            <person name="Durkin A.S."/>
            <person name="Haft D.H."/>
            <person name="Vamathevan J.J."/>
            <person name="Khouri H."/>
            <person name="Utterback T.R."/>
            <person name="Lee C."/>
            <person name="Dimitrov G."/>
            <person name="Jiang L."/>
            <person name="Qin H."/>
            <person name="Weidman J."/>
            <person name="Tran K."/>
            <person name="Kang K.H."/>
            <person name="Hance I.R."/>
            <person name="Nelson K.E."/>
            <person name="Fraser C.M."/>
        </authorList>
    </citation>
    <scope>NUCLEOTIDE SEQUENCE [LARGE SCALE GENOMIC DNA]</scope>
    <source>
        <strain>ATCC 35984 / DSM 28319 / BCRC 17069 / CCUG 31568 / BM 3577 / RP62A</strain>
    </source>
</reference>